<gene>
    <name type="ordered locus">Os09g0249400</name>
    <name type="ordered locus">LOC_Os09g07480</name>
    <name type="ORF">OJ1695_A02.21</name>
    <name type="ORF">OsJ_28518</name>
</gene>
<proteinExistence type="evidence at transcript level"/>
<organism>
    <name type="scientific">Oryza sativa subsp. japonica</name>
    <name type="common">Rice</name>
    <dbReference type="NCBI Taxonomy" id="39947"/>
    <lineage>
        <taxon>Eukaryota</taxon>
        <taxon>Viridiplantae</taxon>
        <taxon>Streptophyta</taxon>
        <taxon>Embryophyta</taxon>
        <taxon>Tracheophyta</taxon>
        <taxon>Spermatophyta</taxon>
        <taxon>Magnoliopsida</taxon>
        <taxon>Liliopsida</taxon>
        <taxon>Poales</taxon>
        <taxon>Poaceae</taxon>
        <taxon>BOP clade</taxon>
        <taxon>Oryzoideae</taxon>
        <taxon>Oryzeae</taxon>
        <taxon>Oryzinae</taxon>
        <taxon>Oryza</taxon>
        <taxon>Oryza sativa</taxon>
    </lineage>
</organism>
<comment type="subunit">
    <text evidence="1">Homodimer and heterodimers.</text>
</comment>
<comment type="subcellular location">
    <subcellularLocation>
        <location evidence="1">Cell membrane</location>
        <topology evidence="1">Multi-pass membrane protein</topology>
    </subcellularLocation>
</comment>
<comment type="similarity">
    <text evidence="3">Belongs to the Casparian strip membrane proteins (CASP) family.</text>
</comment>
<reference key="1">
    <citation type="journal article" date="2005" name="Nature">
        <title>The map-based sequence of the rice genome.</title>
        <authorList>
            <consortium name="International rice genome sequencing project (IRGSP)"/>
        </authorList>
    </citation>
    <scope>NUCLEOTIDE SEQUENCE [LARGE SCALE GENOMIC DNA]</scope>
    <source>
        <strain>cv. Nipponbare</strain>
    </source>
</reference>
<reference key="2">
    <citation type="journal article" date="2008" name="Nucleic Acids Res.">
        <title>The rice annotation project database (RAP-DB): 2008 update.</title>
        <authorList>
            <consortium name="The rice annotation project (RAP)"/>
        </authorList>
    </citation>
    <scope>GENOME REANNOTATION</scope>
    <source>
        <strain>cv. Nipponbare</strain>
    </source>
</reference>
<reference key="3">
    <citation type="journal article" date="2013" name="Rice">
        <title>Improvement of the Oryza sativa Nipponbare reference genome using next generation sequence and optical map data.</title>
        <authorList>
            <person name="Kawahara Y."/>
            <person name="de la Bastide M."/>
            <person name="Hamilton J.P."/>
            <person name="Kanamori H."/>
            <person name="McCombie W.R."/>
            <person name="Ouyang S."/>
            <person name="Schwartz D.C."/>
            <person name="Tanaka T."/>
            <person name="Wu J."/>
            <person name="Zhou S."/>
            <person name="Childs K.L."/>
            <person name="Davidson R.M."/>
            <person name="Lin H."/>
            <person name="Quesada-Ocampo L."/>
            <person name="Vaillancourt B."/>
            <person name="Sakai H."/>
            <person name="Lee S.S."/>
            <person name="Kim J."/>
            <person name="Numa H."/>
            <person name="Itoh T."/>
            <person name="Buell C.R."/>
            <person name="Matsumoto T."/>
        </authorList>
    </citation>
    <scope>GENOME REANNOTATION</scope>
    <source>
        <strain>cv. Nipponbare</strain>
    </source>
</reference>
<reference key="4">
    <citation type="journal article" date="2005" name="PLoS Biol.">
        <title>The genomes of Oryza sativa: a history of duplications.</title>
        <authorList>
            <person name="Yu J."/>
            <person name="Wang J."/>
            <person name="Lin W."/>
            <person name="Li S."/>
            <person name="Li H."/>
            <person name="Zhou J."/>
            <person name="Ni P."/>
            <person name="Dong W."/>
            <person name="Hu S."/>
            <person name="Zeng C."/>
            <person name="Zhang J."/>
            <person name="Zhang Y."/>
            <person name="Li R."/>
            <person name="Xu Z."/>
            <person name="Li S."/>
            <person name="Li X."/>
            <person name="Zheng H."/>
            <person name="Cong L."/>
            <person name="Lin L."/>
            <person name="Yin J."/>
            <person name="Geng J."/>
            <person name="Li G."/>
            <person name="Shi J."/>
            <person name="Liu J."/>
            <person name="Lv H."/>
            <person name="Li J."/>
            <person name="Wang J."/>
            <person name="Deng Y."/>
            <person name="Ran L."/>
            <person name="Shi X."/>
            <person name="Wang X."/>
            <person name="Wu Q."/>
            <person name="Li C."/>
            <person name="Ren X."/>
            <person name="Wang J."/>
            <person name="Wang X."/>
            <person name="Li D."/>
            <person name="Liu D."/>
            <person name="Zhang X."/>
            <person name="Ji Z."/>
            <person name="Zhao W."/>
            <person name="Sun Y."/>
            <person name="Zhang Z."/>
            <person name="Bao J."/>
            <person name="Han Y."/>
            <person name="Dong L."/>
            <person name="Ji J."/>
            <person name="Chen P."/>
            <person name="Wu S."/>
            <person name="Liu J."/>
            <person name="Xiao Y."/>
            <person name="Bu D."/>
            <person name="Tan J."/>
            <person name="Yang L."/>
            <person name="Ye C."/>
            <person name="Zhang J."/>
            <person name="Xu J."/>
            <person name="Zhou Y."/>
            <person name="Yu Y."/>
            <person name="Zhang B."/>
            <person name="Zhuang S."/>
            <person name="Wei H."/>
            <person name="Liu B."/>
            <person name="Lei M."/>
            <person name="Yu H."/>
            <person name="Li Y."/>
            <person name="Xu H."/>
            <person name="Wei S."/>
            <person name="He X."/>
            <person name="Fang L."/>
            <person name="Zhang Z."/>
            <person name="Zhang Y."/>
            <person name="Huang X."/>
            <person name="Su Z."/>
            <person name="Tong W."/>
            <person name="Li J."/>
            <person name="Tong Z."/>
            <person name="Li S."/>
            <person name="Ye J."/>
            <person name="Wang L."/>
            <person name="Fang L."/>
            <person name="Lei T."/>
            <person name="Chen C.-S."/>
            <person name="Chen H.-C."/>
            <person name="Xu Z."/>
            <person name="Li H."/>
            <person name="Huang H."/>
            <person name="Zhang F."/>
            <person name="Xu H."/>
            <person name="Li N."/>
            <person name="Zhao C."/>
            <person name="Li S."/>
            <person name="Dong L."/>
            <person name="Huang Y."/>
            <person name="Li L."/>
            <person name="Xi Y."/>
            <person name="Qi Q."/>
            <person name="Li W."/>
            <person name="Zhang B."/>
            <person name="Hu W."/>
            <person name="Zhang Y."/>
            <person name="Tian X."/>
            <person name="Jiao Y."/>
            <person name="Liang X."/>
            <person name="Jin J."/>
            <person name="Gao L."/>
            <person name="Zheng W."/>
            <person name="Hao B."/>
            <person name="Liu S.-M."/>
            <person name="Wang W."/>
            <person name="Yuan L."/>
            <person name="Cao M."/>
            <person name="McDermott J."/>
            <person name="Samudrala R."/>
            <person name="Wang J."/>
            <person name="Wong G.K.-S."/>
            <person name="Yang H."/>
        </authorList>
    </citation>
    <scope>NUCLEOTIDE SEQUENCE [LARGE SCALE GENOMIC DNA]</scope>
    <source>
        <strain>cv. Nipponbare</strain>
    </source>
</reference>
<reference key="5">
    <citation type="journal article" date="2003" name="Science">
        <title>Collection, mapping, and annotation of over 28,000 cDNA clones from japonica rice.</title>
        <authorList>
            <consortium name="The rice full-length cDNA consortium"/>
        </authorList>
    </citation>
    <scope>NUCLEOTIDE SEQUENCE [LARGE SCALE MRNA]</scope>
    <source>
        <strain>cv. Nipponbare</strain>
    </source>
</reference>
<reference key="6">
    <citation type="journal article" date="2014" name="Plant Physiol.">
        <title>Functional and evolutionary analysis of the CASPARIAN STRIP MEMBRANE DOMAIN PROTEIN family.</title>
        <authorList>
            <person name="Roppolo D."/>
            <person name="Boeckmann B."/>
            <person name="Pfister A."/>
            <person name="Boutet E."/>
            <person name="Rubio M.C."/>
            <person name="Denervaud-Tendon V."/>
            <person name="Vermeer J.E."/>
            <person name="Gheyselinck J."/>
            <person name="Xenarios I."/>
            <person name="Geldner N."/>
        </authorList>
    </citation>
    <scope>GENE FAMILY</scope>
    <scope>NOMENCLATURE</scope>
</reference>
<name>CSPLQ_ORYSJ</name>
<dbReference type="EMBL" id="AP005578">
    <property type="protein sequence ID" value="BAD19907.1"/>
    <property type="molecule type" value="Genomic_DNA"/>
</dbReference>
<dbReference type="EMBL" id="AP008215">
    <property type="protein sequence ID" value="BAF24586.1"/>
    <property type="molecule type" value="Genomic_DNA"/>
</dbReference>
<dbReference type="EMBL" id="AP014965">
    <property type="protein sequence ID" value="BAT07033.1"/>
    <property type="molecule type" value="Genomic_DNA"/>
</dbReference>
<dbReference type="EMBL" id="CM000146">
    <property type="protein sequence ID" value="EEE69262.1"/>
    <property type="molecule type" value="Genomic_DNA"/>
</dbReference>
<dbReference type="EMBL" id="AK063577">
    <property type="protein sequence ID" value="BAG88775.1"/>
    <property type="molecule type" value="mRNA"/>
</dbReference>
<dbReference type="RefSeq" id="XP_015612129.1">
    <property type="nucleotide sequence ID" value="XM_015756643.1"/>
</dbReference>
<dbReference type="FunCoup" id="Q6K478">
    <property type="interactions" value="1183"/>
</dbReference>
<dbReference type="STRING" id="39947.Q6K478"/>
<dbReference type="PaxDb" id="39947-Q6K478"/>
<dbReference type="EnsemblPlants" id="Os09t0249400-01">
    <property type="protein sequence ID" value="Os09t0249400-01"/>
    <property type="gene ID" value="Os09g0249400"/>
</dbReference>
<dbReference type="Gramene" id="Os09t0249400-01">
    <property type="protein sequence ID" value="Os09t0249400-01"/>
    <property type="gene ID" value="Os09g0249400"/>
</dbReference>
<dbReference type="KEGG" id="dosa:Os09g0249400"/>
<dbReference type="eggNOG" id="ENOG502RXNM">
    <property type="taxonomic scope" value="Eukaryota"/>
</dbReference>
<dbReference type="HOGENOM" id="CLU_103961_1_0_1"/>
<dbReference type="InParanoid" id="Q6K478"/>
<dbReference type="OMA" id="HTAFCYL"/>
<dbReference type="OrthoDB" id="754299at2759"/>
<dbReference type="Proteomes" id="UP000000763">
    <property type="component" value="Chromosome 9"/>
</dbReference>
<dbReference type="Proteomes" id="UP000007752">
    <property type="component" value="Chromosome 9"/>
</dbReference>
<dbReference type="Proteomes" id="UP000059680">
    <property type="component" value="Chromosome 9"/>
</dbReference>
<dbReference type="GO" id="GO:0016020">
    <property type="term" value="C:membrane"/>
    <property type="evidence" value="ECO:0000318"/>
    <property type="project" value="GO_Central"/>
</dbReference>
<dbReference type="GO" id="GO:0005886">
    <property type="term" value="C:plasma membrane"/>
    <property type="evidence" value="ECO:0007669"/>
    <property type="project" value="UniProtKB-SubCell"/>
</dbReference>
<dbReference type="InterPro" id="IPR006702">
    <property type="entry name" value="CASP_dom"/>
</dbReference>
<dbReference type="InterPro" id="IPR045009">
    <property type="entry name" value="CASPL-5"/>
</dbReference>
<dbReference type="PANTHER" id="PTHR32021">
    <property type="entry name" value="CASP-LIKE PROTEIN 5B3"/>
    <property type="match status" value="1"/>
</dbReference>
<dbReference type="PANTHER" id="PTHR32021:SF51">
    <property type="entry name" value="CASP-LIKE PROTEIN 5B3"/>
    <property type="match status" value="1"/>
</dbReference>
<dbReference type="Pfam" id="PF04535">
    <property type="entry name" value="CASP_dom"/>
    <property type="match status" value="1"/>
</dbReference>
<keyword id="KW-1003">Cell membrane</keyword>
<keyword id="KW-0325">Glycoprotein</keyword>
<keyword id="KW-0472">Membrane</keyword>
<keyword id="KW-1185">Reference proteome</keyword>
<keyword id="KW-0812">Transmembrane</keyword>
<keyword id="KW-1133">Transmembrane helix</keyword>
<feature type="chain" id="PRO_0000418687" description="CASP-like protein 5B3">
    <location>
        <begin position="1"/>
        <end position="154"/>
    </location>
</feature>
<feature type="topological domain" description="Cytoplasmic" evidence="2">
    <location>
        <begin position="1"/>
        <end position="17"/>
    </location>
</feature>
<feature type="transmembrane region" description="Helical" evidence="2">
    <location>
        <begin position="18"/>
        <end position="38"/>
    </location>
</feature>
<feature type="topological domain" description="Extracellular" evidence="2">
    <location>
        <begin position="39"/>
        <end position="42"/>
    </location>
</feature>
<feature type="transmembrane region" description="Helical" evidence="2">
    <location>
        <begin position="43"/>
        <end position="63"/>
    </location>
</feature>
<feature type="topological domain" description="Cytoplasmic" evidence="2">
    <location>
        <begin position="64"/>
        <end position="77"/>
    </location>
</feature>
<feature type="transmembrane region" description="Helical" evidence="2">
    <location>
        <begin position="78"/>
        <end position="98"/>
    </location>
</feature>
<feature type="topological domain" description="Extracellular" evidence="2">
    <location>
        <begin position="99"/>
        <end position="129"/>
    </location>
</feature>
<feature type="transmembrane region" description="Helical" evidence="2">
    <location>
        <begin position="130"/>
        <end position="150"/>
    </location>
</feature>
<feature type="topological domain" description="Cytoplasmic" evidence="2">
    <location>
        <begin position="151"/>
        <end position="154"/>
    </location>
</feature>
<feature type="glycosylation site" description="N-linked (GlcNAc...) asparagine" evidence="2">
    <location>
        <position position="39"/>
    </location>
</feature>
<evidence type="ECO:0000250" key="1"/>
<evidence type="ECO:0000255" key="2"/>
<evidence type="ECO:0000305" key="3"/>
<sequence>MKDVVGSPGTWSGMSLRVSQCVFAGASVVAMASAYGFSNYTAFCYLIASMGLQLLWSFGLACLDIYSLQTKRDLHNPVLVSLFVVGDWVTAILSFAAASASAGVTILFERDVHFCRMYPQLSCGRYELSVILAFITWSFIATSAVSMFWLLASL</sequence>
<protein>
    <recommendedName>
        <fullName>CASP-like protein 5B3</fullName>
        <shortName>OsCASPL5B3</shortName>
    </recommendedName>
</protein>
<accession>Q6K478</accession>
<accession>A0A0P0XK66</accession>